<protein>
    <recommendedName>
        <fullName evidence="1">Co-chaperonin GroES</fullName>
    </recommendedName>
    <alternativeName>
        <fullName evidence="1">10 kDa chaperonin</fullName>
    </alternativeName>
    <alternativeName>
        <fullName evidence="1">Chaperonin-10</fullName>
        <shortName evidence="1">Cpn10</shortName>
    </alternativeName>
</protein>
<dbReference type="EMBL" id="CP000263">
    <property type="protein sequence ID" value="ABJ90495.1"/>
    <property type="molecule type" value="Genomic_DNA"/>
</dbReference>
<dbReference type="RefSeq" id="WP_011672414.1">
    <property type="nucleotide sequence ID" value="NC_008513.1"/>
</dbReference>
<dbReference type="SMR" id="Q058F4"/>
<dbReference type="STRING" id="372461.BCc_010"/>
<dbReference type="KEGG" id="bcc:BCc_010"/>
<dbReference type="eggNOG" id="COG0234">
    <property type="taxonomic scope" value="Bacteria"/>
</dbReference>
<dbReference type="HOGENOM" id="CLU_132825_1_1_6"/>
<dbReference type="OrthoDB" id="9806791at2"/>
<dbReference type="Proteomes" id="UP000000669">
    <property type="component" value="Chromosome"/>
</dbReference>
<dbReference type="GO" id="GO:0005737">
    <property type="term" value="C:cytoplasm"/>
    <property type="evidence" value="ECO:0007669"/>
    <property type="project" value="UniProtKB-SubCell"/>
</dbReference>
<dbReference type="GO" id="GO:0005524">
    <property type="term" value="F:ATP binding"/>
    <property type="evidence" value="ECO:0007669"/>
    <property type="project" value="InterPro"/>
</dbReference>
<dbReference type="GO" id="GO:0046872">
    <property type="term" value="F:metal ion binding"/>
    <property type="evidence" value="ECO:0007669"/>
    <property type="project" value="TreeGrafter"/>
</dbReference>
<dbReference type="GO" id="GO:0044183">
    <property type="term" value="F:protein folding chaperone"/>
    <property type="evidence" value="ECO:0007669"/>
    <property type="project" value="InterPro"/>
</dbReference>
<dbReference type="GO" id="GO:0051087">
    <property type="term" value="F:protein-folding chaperone binding"/>
    <property type="evidence" value="ECO:0007669"/>
    <property type="project" value="TreeGrafter"/>
</dbReference>
<dbReference type="GO" id="GO:0051082">
    <property type="term" value="F:unfolded protein binding"/>
    <property type="evidence" value="ECO:0007669"/>
    <property type="project" value="TreeGrafter"/>
</dbReference>
<dbReference type="GO" id="GO:0051085">
    <property type="term" value="P:chaperone cofactor-dependent protein refolding"/>
    <property type="evidence" value="ECO:0007669"/>
    <property type="project" value="TreeGrafter"/>
</dbReference>
<dbReference type="CDD" id="cd00320">
    <property type="entry name" value="cpn10"/>
    <property type="match status" value="1"/>
</dbReference>
<dbReference type="FunFam" id="2.30.33.40:FF:000001">
    <property type="entry name" value="10 kDa chaperonin"/>
    <property type="match status" value="1"/>
</dbReference>
<dbReference type="Gene3D" id="2.30.33.40">
    <property type="entry name" value="GroES chaperonin"/>
    <property type="match status" value="1"/>
</dbReference>
<dbReference type="HAMAP" id="MF_00580">
    <property type="entry name" value="CH10"/>
    <property type="match status" value="1"/>
</dbReference>
<dbReference type="InterPro" id="IPR020818">
    <property type="entry name" value="Chaperonin_GroES"/>
</dbReference>
<dbReference type="InterPro" id="IPR037124">
    <property type="entry name" value="Chaperonin_GroES_sf"/>
</dbReference>
<dbReference type="InterPro" id="IPR018369">
    <property type="entry name" value="Chaprnonin_Cpn10_CS"/>
</dbReference>
<dbReference type="InterPro" id="IPR011032">
    <property type="entry name" value="GroES-like_sf"/>
</dbReference>
<dbReference type="NCBIfam" id="NF001526">
    <property type="entry name" value="PRK00364.1-1"/>
    <property type="match status" value="1"/>
</dbReference>
<dbReference type="PANTHER" id="PTHR10772">
    <property type="entry name" value="10 KDA HEAT SHOCK PROTEIN"/>
    <property type="match status" value="1"/>
</dbReference>
<dbReference type="PANTHER" id="PTHR10772:SF58">
    <property type="entry name" value="CO-CHAPERONIN GROES"/>
    <property type="match status" value="1"/>
</dbReference>
<dbReference type="Pfam" id="PF00166">
    <property type="entry name" value="Cpn10"/>
    <property type="match status" value="1"/>
</dbReference>
<dbReference type="PRINTS" id="PR00297">
    <property type="entry name" value="CHAPERONIN10"/>
</dbReference>
<dbReference type="SMART" id="SM00883">
    <property type="entry name" value="Cpn10"/>
    <property type="match status" value="1"/>
</dbReference>
<dbReference type="SUPFAM" id="SSF50129">
    <property type="entry name" value="GroES-like"/>
    <property type="match status" value="1"/>
</dbReference>
<dbReference type="PROSITE" id="PS00681">
    <property type="entry name" value="CHAPERONINS_CPN10"/>
    <property type="match status" value="1"/>
</dbReference>
<accession>Q058F4</accession>
<gene>
    <name evidence="1" type="primary">groES</name>
    <name evidence="1" type="synonym">groS</name>
    <name type="ordered locus">BCc_010</name>
</gene>
<reference key="1">
    <citation type="journal article" date="2006" name="Science">
        <title>A small microbial genome: the end of a long symbiotic relationship?</title>
        <authorList>
            <person name="Perez-Brocal V."/>
            <person name="Gil R."/>
            <person name="Ramos S."/>
            <person name="Lamelas A."/>
            <person name="Postigo M."/>
            <person name="Michelena J.M."/>
            <person name="Silva F.J."/>
            <person name="Moya A."/>
            <person name="Latorre A."/>
        </authorList>
    </citation>
    <scope>NUCLEOTIDE SEQUENCE [LARGE SCALE GENOMIC DNA]</scope>
    <source>
        <strain>Cc</strain>
    </source>
</reference>
<comment type="function">
    <text evidence="1">Together with the chaperonin GroEL, plays an essential role in assisting protein folding. The GroEL-GroES system forms a nano-cage that allows encapsulation of the non-native substrate proteins and provides a physical environment optimized to promote and accelerate protein folding. GroES binds to the apical surface of the GroEL ring, thereby capping the opening of the GroEL channel.</text>
</comment>
<comment type="subunit">
    <text evidence="1">Heptamer of 7 subunits arranged in a ring. Interacts with the chaperonin GroEL.</text>
</comment>
<comment type="subcellular location">
    <subcellularLocation>
        <location evidence="1">Cytoplasm</location>
    </subcellularLocation>
</comment>
<comment type="similarity">
    <text evidence="1">Belongs to the GroES chaperonin family.</text>
</comment>
<feature type="chain" id="PRO_1000025224" description="Co-chaperonin GroES">
    <location>
        <begin position="1"/>
        <end position="97"/>
    </location>
</feature>
<name>CH10_BUCCC</name>
<organism>
    <name type="scientific">Buchnera aphidicola subsp. Cinara cedri (strain Cc)</name>
    <dbReference type="NCBI Taxonomy" id="372461"/>
    <lineage>
        <taxon>Bacteria</taxon>
        <taxon>Pseudomonadati</taxon>
        <taxon>Pseudomonadota</taxon>
        <taxon>Gammaproteobacteria</taxon>
        <taxon>Enterobacterales</taxon>
        <taxon>Erwiniaceae</taxon>
        <taxon>Buchnera</taxon>
    </lineage>
</organism>
<sequence>MKLRPLHDRVIVKRNEVELKSAGGIVLTGSAAGKSTRGVVLSVGKGRILDNGSIKKLDVKVGDIVIFNEGYGAKTETINNEEVLILTENDILAIVEK</sequence>
<evidence type="ECO:0000255" key="1">
    <source>
        <dbReference type="HAMAP-Rule" id="MF_00580"/>
    </source>
</evidence>
<keyword id="KW-0143">Chaperone</keyword>
<keyword id="KW-0963">Cytoplasm</keyword>
<keyword id="KW-1185">Reference proteome</keyword>
<proteinExistence type="inferred from homology"/>